<feature type="chain" id="PRO_0000196570" description="Membrane-bound lytic murein transglycosylase E">
    <location>
        <begin position="1"/>
        <end position="221"/>
    </location>
</feature>
<gene>
    <name type="primary">mltE</name>
    <name type="ordered locus">BU264</name>
</gene>
<protein>
    <recommendedName>
        <fullName>Membrane-bound lytic murein transglycosylase E</fullName>
        <ecNumber>4.2.2.n1</ecNumber>
    </recommendedName>
    <alternativeName>
        <fullName>Murein hydrolase E</fullName>
    </alternativeName>
</protein>
<comment type="function">
    <text evidence="1">Murein-degrading enzyme. May play a role in recycling of muropeptides during cell elongation and/or cell division (By similarity).</text>
</comment>
<comment type="catalytic activity">
    <reaction>
        <text>Exolytic cleavage of the (1-&gt;4)-beta-glycosidic linkage between N-acetylmuramic acid (MurNAc) and N-acetylglucosamine (GlcNAc) residues in peptidoglycan, from either the reducing or the non-reducing ends of the peptidoglycan chains, with concomitant formation of a 1,6-anhydrobond in the MurNAc residue.</text>
        <dbReference type="EC" id="4.2.2.n1"/>
    </reaction>
</comment>
<comment type="similarity">
    <text evidence="2">Belongs to the transglycosylase Slt family.</text>
</comment>
<sequence>MFQSSIYNKNYKKFLKNLKYQGEYAVTLGILAISILLLTGFNQFLNTKPTLKKNYFLNQKSIKNTLKNWNDIIATTANKYKVDEKLIKSIVYVESSGNPYAKSQSNAIGLMQIKPSSAGAEVYRLNGKKGRPSIQELYDPKTNIDIGTSYISFLQKKFISIKNKDVMRYAIIVAYVNGTSALLKTFSKSRKEAINIINTMTKKSFCTHIKKNTRQCKHFVI</sequence>
<reference key="1">
    <citation type="journal article" date="2000" name="Nature">
        <title>Genome sequence of the endocellular bacterial symbiont of aphids Buchnera sp. APS.</title>
        <authorList>
            <person name="Shigenobu S."/>
            <person name="Watanabe H."/>
            <person name="Hattori M."/>
            <person name="Sakaki Y."/>
            <person name="Ishikawa H."/>
        </authorList>
    </citation>
    <scope>NUCLEOTIDE SEQUENCE [LARGE SCALE GENOMIC DNA]</scope>
    <source>
        <strain>APS</strain>
    </source>
</reference>
<accession>P57352</accession>
<name>MLTE_BUCAI</name>
<keyword id="KW-0961">Cell wall biogenesis/degradation</keyword>
<keyword id="KW-0456">Lyase</keyword>
<keyword id="KW-1185">Reference proteome</keyword>
<dbReference type="EC" id="4.2.2.n1"/>
<dbReference type="EMBL" id="BA000003">
    <property type="protein sequence ID" value="BAB12974.1"/>
    <property type="molecule type" value="Genomic_DNA"/>
</dbReference>
<dbReference type="RefSeq" id="NP_240088.1">
    <property type="nucleotide sequence ID" value="NC_002528.1"/>
</dbReference>
<dbReference type="SMR" id="P57352"/>
<dbReference type="STRING" id="563178.BUAP5A_259"/>
<dbReference type="CAZy" id="GH23">
    <property type="family name" value="Glycoside Hydrolase Family 23"/>
</dbReference>
<dbReference type="EnsemblBacteria" id="BAB12974">
    <property type="protein sequence ID" value="BAB12974"/>
    <property type="gene ID" value="BAB12974"/>
</dbReference>
<dbReference type="KEGG" id="buc:BU264"/>
<dbReference type="PATRIC" id="fig|107806.10.peg.274"/>
<dbReference type="eggNOG" id="COG0741">
    <property type="taxonomic scope" value="Bacteria"/>
</dbReference>
<dbReference type="HOGENOM" id="CLU_103257_0_0_6"/>
<dbReference type="Proteomes" id="UP000001806">
    <property type="component" value="Chromosome"/>
</dbReference>
<dbReference type="GO" id="GO:0016020">
    <property type="term" value="C:membrane"/>
    <property type="evidence" value="ECO:0007669"/>
    <property type="project" value="InterPro"/>
</dbReference>
<dbReference type="GO" id="GO:0008933">
    <property type="term" value="F:peptidoglycan lytic transglycosylase activity"/>
    <property type="evidence" value="ECO:0007669"/>
    <property type="project" value="InterPro"/>
</dbReference>
<dbReference type="GO" id="GO:0071555">
    <property type="term" value="P:cell wall organization"/>
    <property type="evidence" value="ECO:0007669"/>
    <property type="project" value="UniProtKB-KW"/>
</dbReference>
<dbReference type="GO" id="GO:0000270">
    <property type="term" value="P:peptidoglycan metabolic process"/>
    <property type="evidence" value="ECO:0007669"/>
    <property type="project" value="InterPro"/>
</dbReference>
<dbReference type="CDD" id="cd16893">
    <property type="entry name" value="LT_MltC_MltE"/>
    <property type="match status" value="1"/>
</dbReference>
<dbReference type="Gene3D" id="1.10.530.10">
    <property type="match status" value="1"/>
</dbReference>
<dbReference type="InterPro" id="IPR023346">
    <property type="entry name" value="Lysozyme-like_dom_sf"/>
</dbReference>
<dbReference type="InterPro" id="IPR000189">
    <property type="entry name" value="Transglyc_AS"/>
</dbReference>
<dbReference type="InterPro" id="IPR008258">
    <property type="entry name" value="Transglycosylase_SLT_dom_1"/>
</dbReference>
<dbReference type="PANTHER" id="PTHR37423:SF4">
    <property type="entry name" value="ENDO-TYPE MEMBRANE-BOUND LYTIC MUREIN TRANSGLYCOSYLASE A"/>
    <property type="match status" value="1"/>
</dbReference>
<dbReference type="PANTHER" id="PTHR37423">
    <property type="entry name" value="SOLUBLE LYTIC MUREIN TRANSGLYCOSYLASE-RELATED"/>
    <property type="match status" value="1"/>
</dbReference>
<dbReference type="Pfam" id="PF01464">
    <property type="entry name" value="SLT"/>
    <property type="match status" value="1"/>
</dbReference>
<dbReference type="SUPFAM" id="SSF53955">
    <property type="entry name" value="Lysozyme-like"/>
    <property type="match status" value="1"/>
</dbReference>
<dbReference type="PROSITE" id="PS00922">
    <property type="entry name" value="TRANSGLYCOSYLASE"/>
    <property type="match status" value="1"/>
</dbReference>
<organism>
    <name type="scientific">Buchnera aphidicola subsp. Acyrthosiphon pisum (strain APS)</name>
    <name type="common">Acyrthosiphon pisum symbiotic bacterium</name>
    <dbReference type="NCBI Taxonomy" id="107806"/>
    <lineage>
        <taxon>Bacteria</taxon>
        <taxon>Pseudomonadati</taxon>
        <taxon>Pseudomonadota</taxon>
        <taxon>Gammaproteobacteria</taxon>
        <taxon>Enterobacterales</taxon>
        <taxon>Erwiniaceae</taxon>
        <taxon>Buchnera</taxon>
    </lineage>
</organism>
<proteinExistence type="inferred from homology"/>
<evidence type="ECO:0000250" key="1"/>
<evidence type="ECO:0000305" key="2"/>